<accession>Q5LDK5</accession>
<sequence length="196" mass="22441">MNINTDIFKIQSNNVMPSRGKILISEPFLHDVTFGRSVVLLVDHTEEGSMGLIINKPLPLMLNDIIKEFKYIEDIPLHKGGPIGTDTLFYLHTLHEIPGTLPINNGLYLNGDFDAIKKYILQGNPIKGKIRFFLGYSGWECEQLIQEIKENTWIISKEENTYLMNEDIKGMWKEALGKLGSKYETWSRFPQVPSLN</sequence>
<proteinExistence type="inferred from homology"/>
<evidence type="ECO:0000255" key="1">
    <source>
        <dbReference type="HAMAP-Rule" id="MF_00758"/>
    </source>
</evidence>
<name>Y2109_BACFN</name>
<organism>
    <name type="scientific">Bacteroides fragilis (strain ATCC 25285 / DSM 2151 / CCUG 4856 / JCM 11019 / LMG 10263 / NCTC 9343 / Onslow / VPI 2553 / EN-2)</name>
    <dbReference type="NCBI Taxonomy" id="272559"/>
    <lineage>
        <taxon>Bacteria</taxon>
        <taxon>Pseudomonadati</taxon>
        <taxon>Bacteroidota</taxon>
        <taxon>Bacteroidia</taxon>
        <taxon>Bacteroidales</taxon>
        <taxon>Bacteroidaceae</taxon>
        <taxon>Bacteroides</taxon>
    </lineage>
</organism>
<protein>
    <recommendedName>
        <fullName evidence="1">UPF0301 protein BF2109</fullName>
    </recommendedName>
</protein>
<feature type="chain" id="PRO_0000258797" description="UPF0301 protein BF2109">
    <location>
        <begin position="1"/>
        <end position="196"/>
    </location>
</feature>
<gene>
    <name type="ordered locus">BF2109</name>
</gene>
<reference key="1">
    <citation type="journal article" date="2005" name="Science">
        <title>Extensive DNA inversions in the B. fragilis genome control variable gene expression.</title>
        <authorList>
            <person name="Cerdeno-Tarraga A.-M."/>
            <person name="Patrick S."/>
            <person name="Crossman L.C."/>
            <person name="Blakely G."/>
            <person name="Abratt V."/>
            <person name="Lennard N."/>
            <person name="Poxton I."/>
            <person name="Duerden B."/>
            <person name="Harris B."/>
            <person name="Quail M.A."/>
            <person name="Barron A."/>
            <person name="Clark L."/>
            <person name="Corton C."/>
            <person name="Doggett J."/>
            <person name="Holden M.T.G."/>
            <person name="Larke N."/>
            <person name="Line A."/>
            <person name="Lord A."/>
            <person name="Norbertczak H."/>
            <person name="Ormond D."/>
            <person name="Price C."/>
            <person name="Rabbinowitsch E."/>
            <person name="Woodward J."/>
            <person name="Barrell B.G."/>
            <person name="Parkhill J."/>
        </authorList>
    </citation>
    <scope>NUCLEOTIDE SEQUENCE [LARGE SCALE GENOMIC DNA]</scope>
    <source>
        <strain>ATCC 25285 / DSM 2151 / CCUG 4856 / JCM 11019 / LMG 10263 / NCTC 9343 / Onslow / VPI 2553 / EN-2</strain>
    </source>
</reference>
<comment type="similarity">
    <text evidence="1">Belongs to the UPF0301 (AlgH) family.</text>
</comment>
<dbReference type="EMBL" id="CR626927">
    <property type="protein sequence ID" value="CAH07804.1"/>
    <property type="molecule type" value="Genomic_DNA"/>
</dbReference>
<dbReference type="RefSeq" id="WP_005787276.1">
    <property type="nucleotide sequence ID" value="NZ_UFTH01000001.1"/>
</dbReference>
<dbReference type="SMR" id="Q5LDK5"/>
<dbReference type="PaxDb" id="272559-BF9343_2023"/>
<dbReference type="KEGG" id="bfs:BF9343_2023"/>
<dbReference type="eggNOG" id="COG1678">
    <property type="taxonomic scope" value="Bacteria"/>
</dbReference>
<dbReference type="HOGENOM" id="CLU_057596_2_1_10"/>
<dbReference type="Proteomes" id="UP000006731">
    <property type="component" value="Chromosome"/>
</dbReference>
<dbReference type="GO" id="GO:0005829">
    <property type="term" value="C:cytosol"/>
    <property type="evidence" value="ECO:0007669"/>
    <property type="project" value="TreeGrafter"/>
</dbReference>
<dbReference type="Gene3D" id="3.40.1740.10">
    <property type="entry name" value="VC0467-like"/>
    <property type="match status" value="1"/>
</dbReference>
<dbReference type="HAMAP" id="MF_00758">
    <property type="entry name" value="UPF0301"/>
    <property type="match status" value="1"/>
</dbReference>
<dbReference type="InterPro" id="IPR003774">
    <property type="entry name" value="AlgH-like"/>
</dbReference>
<dbReference type="PANTHER" id="PTHR30327">
    <property type="entry name" value="UNCHARACTERIZED PROTEIN YQGE"/>
    <property type="match status" value="1"/>
</dbReference>
<dbReference type="PANTHER" id="PTHR30327:SF1">
    <property type="entry name" value="UPF0301 PROTEIN YQGE"/>
    <property type="match status" value="1"/>
</dbReference>
<dbReference type="Pfam" id="PF02622">
    <property type="entry name" value="DUF179"/>
    <property type="match status" value="1"/>
</dbReference>
<dbReference type="SUPFAM" id="SSF143456">
    <property type="entry name" value="VC0467-like"/>
    <property type="match status" value="1"/>
</dbReference>